<feature type="chain" id="PRO_0000134807" description="6,7-dimethyl-8-ribityllumazine synthase">
    <location>
        <begin position="1"/>
        <end position="154"/>
    </location>
</feature>
<feature type="active site" description="Proton donor" evidence="1">
    <location>
        <position position="87"/>
    </location>
</feature>
<feature type="binding site" evidence="1">
    <location>
        <position position="21"/>
    </location>
    <ligand>
        <name>5-amino-6-(D-ribitylamino)uracil</name>
        <dbReference type="ChEBI" id="CHEBI:15934"/>
    </ligand>
</feature>
<feature type="binding site" evidence="1">
    <location>
        <begin position="55"/>
        <end position="57"/>
    </location>
    <ligand>
        <name>5-amino-6-(D-ribitylamino)uracil</name>
        <dbReference type="ChEBI" id="CHEBI:15934"/>
    </ligand>
</feature>
<feature type="binding site" evidence="1">
    <location>
        <begin position="79"/>
        <end position="81"/>
    </location>
    <ligand>
        <name>5-amino-6-(D-ribitylamino)uracil</name>
        <dbReference type="ChEBI" id="CHEBI:15934"/>
    </ligand>
</feature>
<feature type="binding site" evidence="1">
    <location>
        <begin position="84"/>
        <end position="85"/>
    </location>
    <ligand>
        <name>(2S)-2-hydroxy-3-oxobutyl phosphate</name>
        <dbReference type="ChEBI" id="CHEBI:58830"/>
    </ligand>
</feature>
<feature type="binding site" evidence="1">
    <location>
        <position position="112"/>
    </location>
    <ligand>
        <name>5-amino-6-(D-ribitylamino)uracil</name>
        <dbReference type="ChEBI" id="CHEBI:15934"/>
    </ligand>
</feature>
<feature type="binding site" evidence="1">
    <location>
        <position position="126"/>
    </location>
    <ligand>
        <name>(2S)-2-hydroxy-3-oxobutyl phosphate</name>
        <dbReference type="ChEBI" id="CHEBI:58830"/>
    </ligand>
</feature>
<protein>
    <recommendedName>
        <fullName evidence="1">6,7-dimethyl-8-ribityllumazine synthase</fullName>
        <shortName evidence="1">DMRL synthase</shortName>
        <shortName evidence="1">LS</shortName>
        <shortName evidence="1">Lumazine synthase</shortName>
        <ecNumber evidence="1">2.5.1.78</ecNumber>
    </recommendedName>
</protein>
<name>RISB_STAAR</name>
<accession>Q6GFT6</accession>
<sequence length="154" mass="16422">MNFEGKLIGKELKVVIVVSRFNDFITGRLLEGAKDTLIRHDVNEDNIDVAFVPGAFEIPLVAKKLASSGNYDAVITLGCVIRGATSHFDYVCNEVAKGVSKVNDQTNVPVIFGILTTESIEQAVERAGTKAGNKGAEAAVSAIEMANLLKSIKA</sequence>
<comment type="function">
    <text evidence="1">Catalyzes the formation of 6,7-dimethyl-8-ribityllumazine by condensation of 5-amino-6-(D-ribitylamino)uracil with 3,4-dihydroxy-2-butanone 4-phosphate. This is the penultimate step in the biosynthesis of riboflavin.</text>
</comment>
<comment type="catalytic activity">
    <reaction evidence="1">
        <text>(2S)-2-hydroxy-3-oxobutyl phosphate + 5-amino-6-(D-ribitylamino)uracil = 6,7-dimethyl-8-(1-D-ribityl)lumazine + phosphate + 2 H2O + H(+)</text>
        <dbReference type="Rhea" id="RHEA:26152"/>
        <dbReference type="ChEBI" id="CHEBI:15377"/>
        <dbReference type="ChEBI" id="CHEBI:15378"/>
        <dbReference type="ChEBI" id="CHEBI:15934"/>
        <dbReference type="ChEBI" id="CHEBI:43474"/>
        <dbReference type="ChEBI" id="CHEBI:58201"/>
        <dbReference type="ChEBI" id="CHEBI:58830"/>
        <dbReference type="EC" id="2.5.1.78"/>
    </reaction>
</comment>
<comment type="pathway">
    <text evidence="1">Cofactor biosynthesis; riboflavin biosynthesis; riboflavin from 2-hydroxy-3-oxobutyl phosphate and 5-amino-6-(D-ribitylamino)uracil: step 1/2.</text>
</comment>
<comment type="subunit">
    <text evidence="1">Forms an icosahedral capsid composed of 60 subunits, arranged as a dodecamer of pentamers.</text>
</comment>
<comment type="similarity">
    <text evidence="1">Belongs to the DMRL synthase family.</text>
</comment>
<keyword id="KW-0686">Riboflavin biosynthesis</keyword>
<keyword id="KW-0808">Transferase</keyword>
<proteinExistence type="inferred from homology"/>
<evidence type="ECO:0000255" key="1">
    <source>
        <dbReference type="HAMAP-Rule" id="MF_00178"/>
    </source>
</evidence>
<gene>
    <name evidence="1" type="primary">ribH</name>
    <name type="ordered locus">SAR1850</name>
</gene>
<organism>
    <name type="scientific">Staphylococcus aureus (strain MRSA252)</name>
    <dbReference type="NCBI Taxonomy" id="282458"/>
    <lineage>
        <taxon>Bacteria</taxon>
        <taxon>Bacillati</taxon>
        <taxon>Bacillota</taxon>
        <taxon>Bacilli</taxon>
        <taxon>Bacillales</taxon>
        <taxon>Staphylococcaceae</taxon>
        <taxon>Staphylococcus</taxon>
    </lineage>
</organism>
<reference key="1">
    <citation type="journal article" date="2004" name="Proc. Natl. Acad. Sci. U.S.A.">
        <title>Complete genomes of two clinical Staphylococcus aureus strains: evidence for the rapid evolution of virulence and drug resistance.</title>
        <authorList>
            <person name="Holden M.T.G."/>
            <person name="Feil E.J."/>
            <person name="Lindsay J.A."/>
            <person name="Peacock S.J."/>
            <person name="Day N.P.J."/>
            <person name="Enright M.C."/>
            <person name="Foster T.J."/>
            <person name="Moore C.E."/>
            <person name="Hurst L."/>
            <person name="Atkin R."/>
            <person name="Barron A."/>
            <person name="Bason N."/>
            <person name="Bentley S.D."/>
            <person name="Chillingworth C."/>
            <person name="Chillingworth T."/>
            <person name="Churcher C."/>
            <person name="Clark L."/>
            <person name="Corton C."/>
            <person name="Cronin A."/>
            <person name="Doggett J."/>
            <person name="Dowd L."/>
            <person name="Feltwell T."/>
            <person name="Hance Z."/>
            <person name="Harris B."/>
            <person name="Hauser H."/>
            <person name="Holroyd S."/>
            <person name="Jagels K."/>
            <person name="James K.D."/>
            <person name="Lennard N."/>
            <person name="Line A."/>
            <person name="Mayes R."/>
            <person name="Moule S."/>
            <person name="Mungall K."/>
            <person name="Ormond D."/>
            <person name="Quail M.A."/>
            <person name="Rabbinowitsch E."/>
            <person name="Rutherford K.M."/>
            <person name="Sanders M."/>
            <person name="Sharp S."/>
            <person name="Simmonds M."/>
            <person name="Stevens K."/>
            <person name="Whitehead S."/>
            <person name="Barrell B.G."/>
            <person name="Spratt B.G."/>
            <person name="Parkhill J."/>
        </authorList>
    </citation>
    <scope>NUCLEOTIDE SEQUENCE [LARGE SCALE GENOMIC DNA]</scope>
    <source>
        <strain>MRSA252</strain>
    </source>
</reference>
<dbReference type="EC" id="2.5.1.78" evidence="1"/>
<dbReference type="EMBL" id="BX571856">
    <property type="protein sequence ID" value="CAG40841.1"/>
    <property type="molecule type" value="Genomic_DNA"/>
</dbReference>
<dbReference type="SMR" id="Q6GFT6"/>
<dbReference type="KEGG" id="sar:SAR1850"/>
<dbReference type="HOGENOM" id="CLU_089358_1_1_9"/>
<dbReference type="UniPathway" id="UPA00275">
    <property type="reaction ID" value="UER00404"/>
</dbReference>
<dbReference type="Proteomes" id="UP000000596">
    <property type="component" value="Chromosome"/>
</dbReference>
<dbReference type="GO" id="GO:0005829">
    <property type="term" value="C:cytosol"/>
    <property type="evidence" value="ECO:0007669"/>
    <property type="project" value="TreeGrafter"/>
</dbReference>
<dbReference type="GO" id="GO:0009349">
    <property type="term" value="C:riboflavin synthase complex"/>
    <property type="evidence" value="ECO:0007669"/>
    <property type="project" value="InterPro"/>
</dbReference>
<dbReference type="GO" id="GO:0000906">
    <property type="term" value="F:6,7-dimethyl-8-ribityllumazine synthase activity"/>
    <property type="evidence" value="ECO:0007669"/>
    <property type="project" value="UniProtKB-UniRule"/>
</dbReference>
<dbReference type="GO" id="GO:0009231">
    <property type="term" value="P:riboflavin biosynthetic process"/>
    <property type="evidence" value="ECO:0007669"/>
    <property type="project" value="UniProtKB-UniRule"/>
</dbReference>
<dbReference type="CDD" id="cd09209">
    <property type="entry name" value="Lumazine_synthase-I"/>
    <property type="match status" value="1"/>
</dbReference>
<dbReference type="FunFam" id="3.40.50.960:FF:000001">
    <property type="entry name" value="6,7-dimethyl-8-ribityllumazine synthase"/>
    <property type="match status" value="1"/>
</dbReference>
<dbReference type="Gene3D" id="3.40.50.960">
    <property type="entry name" value="Lumazine/riboflavin synthase"/>
    <property type="match status" value="1"/>
</dbReference>
<dbReference type="HAMAP" id="MF_00178">
    <property type="entry name" value="Lumazine_synth"/>
    <property type="match status" value="1"/>
</dbReference>
<dbReference type="InterPro" id="IPR034964">
    <property type="entry name" value="LS"/>
</dbReference>
<dbReference type="InterPro" id="IPR002180">
    <property type="entry name" value="LS/RS"/>
</dbReference>
<dbReference type="InterPro" id="IPR036467">
    <property type="entry name" value="LS/RS_sf"/>
</dbReference>
<dbReference type="NCBIfam" id="TIGR00114">
    <property type="entry name" value="lumazine-synth"/>
    <property type="match status" value="1"/>
</dbReference>
<dbReference type="NCBIfam" id="NF000812">
    <property type="entry name" value="PRK00061.1-4"/>
    <property type="match status" value="1"/>
</dbReference>
<dbReference type="PANTHER" id="PTHR21058:SF0">
    <property type="entry name" value="6,7-DIMETHYL-8-RIBITYLLUMAZINE SYNTHASE"/>
    <property type="match status" value="1"/>
</dbReference>
<dbReference type="PANTHER" id="PTHR21058">
    <property type="entry name" value="6,7-DIMETHYL-8-RIBITYLLUMAZINE SYNTHASE DMRL SYNTHASE LUMAZINE SYNTHASE"/>
    <property type="match status" value="1"/>
</dbReference>
<dbReference type="Pfam" id="PF00885">
    <property type="entry name" value="DMRL_synthase"/>
    <property type="match status" value="1"/>
</dbReference>
<dbReference type="SUPFAM" id="SSF52121">
    <property type="entry name" value="Lumazine synthase"/>
    <property type="match status" value="1"/>
</dbReference>